<comment type="function">
    <text evidence="2 3">Part of the ABC transporter complex MlaFEDB, which is involved in a phospholipid transport pathway that maintains lipid asymmetry in the outer membrane by retrograde trafficking of phospholipids from the outer membrane to the inner membrane. Responsible for energy coupling to the transport system.</text>
</comment>
<comment type="subunit">
    <text evidence="3 4 7">The complex is composed of two ATP-binding proteins (MlaF), two transmembrane proteins (MlaE), two cytoplasmic solute-binding proteins (MlaB) and six periplasmic solute-binding proteins (MlaD).</text>
</comment>
<comment type="interaction">
    <interactant intactId="EBI-561408">
        <id>P63386</id>
    </interactant>
    <interactant intactId="EBI-543750">
        <id>P0A6F5</id>
        <label>groEL</label>
    </interactant>
    <organismsDiffer>false</organismsDiffer>
    <experiments>4</experiments>
</comment>
<comment type="subcellular location">
    <subcellularLocation>
        <location evidence="7">Cell inner membrane</location>
        <topology evidence="7">Peripheral membrane protein</topology>
        <orientation evidence="7">Cytoplasmic side</orientation>
    </subcellularLocation>
</comment>
<comment type="disruption phenotype">
    <text evidence="2">Mutation leads to accumulation of phospholipid in the outer leaflet of the outer membrane and increased outer membrane permeability. It confers sensitivity to SDS-EDTA.</text>
</comment>
<comment type="similarity">
    <text evidence="6">Belongs to the ABC transporter superfamily. MlaF family.</text>
</comment>
<feature type="chain" id="PRO_0000093171" description="Intermembrane phospholipid transport system ATP-binding protein MlaF">
    <location>
        <begin position="1"/>
        <end position="269"/>
    </location>
</feature>
<feature type="domain" description="ABC transporter" evidence="1">
    <location>
        <begin position="9"/>
        <end position="245"/>
    </location>
</feature>
<feature type="binding site" evidence="1">
    <location>
        <begin position="41"/>
        <end position="48"/>
    </location>
    <ligand>
        <name>ATP</name>
        <dbReference type="ChEBI" id="CHEBI:30616"/>
    </ligand>
</feature>
<feature type="strand" evidence="8">
    <location>
        <begin position="6"/>
        <end position="18"/>
    </location>
</feature>
<feature type="strand" evidence="8">
    <location>
        <begin position="21"/>
        <end position="32"/>
    </location>
</feature>
<feature type="strand" evidence="8">
    <location>
        <begin position="35"/>
        <end position="40"/>
    </location>
</feature>
<feature type="strand" evidence="9">
    <location>
        <begin position="43"/>
        <end position="45"/>
    </location>
</feature>
<feature type="helix" evidence="8">
    <location>
        <begin position="47"/>
        <end position="54"/>
    </location>
</feature>
<feature type="strand" evidence="8">
    <location>
        <begin position="61"/>
        <end position="67"/>
    </location>
</feature>
<feature type="strand" evidence="8">
    <location>
        <begin position="70"/>
        <end position="72"/>
    </location>
</feature>
<feature type="helix" evidence="8">
    <location>
        <begin position="77"/>
        <end position="84"/>
    </location>
</feature>
<feature type="strand" evidence="8">
    <location>
        <begin position="87"/>
        <end position="90"/>
    </location>
</feature>
<feature type="turn" evidence="10">
    <location>
        <begin position="92"/>
        <end position="95"/>
    </location>
</feature>
<feature type="strand" evidence="9">
    <location>
        <begin position="98"/>
        <end position="100"/>
    </location>
</feature>
<feature type="helix" evidence="8">
    <location>
        <begin position="102"/>
        <end position="113"/>
    </location>
</feature>
<feature type="helix" evidence="8">
    <location>
        <begin position="118"/>
        <end position="132"/>
    </location>
</feature>
<feature type="helix" evidence="8">
    <location>
        <begin position="135"/>
        <end position="137"/>
    </location>
</feature>
<feature type="strand" evidence="10">
    <location>
        <begin position="138"/>
        <end position="140"/>
    </location>
</feature>
<feature type="helix" evidence="8">
    <location>
        <begin position="142"/>
        <end position="144"/>
    </location>
</feature>
<feature type="helix" evidence="8">
    <location>
        <begin position="147"/>
        <end position="158"/>
    </location>
</feature>
<feature type="strand" evidence="8">
    <location>
        <begin position="164"/>
        <end position="170"/>
    </location>
</feature>
<feature type="turn" evidence="8">
    <location>
        <begin position="171"/>
        <end position="174"/>
    </location>
</feature>
<feature type="helix" evidence="8">
    <location>
        <begin position="177"/>
        <end position="194"/>
    </location>
</feature>
<feature type="strand" evidence="8">
    <location>
        <begin position="197"/>
        <end position="201"/>
    </location>
</feature>
<feature type="helix" evidence="8">
    <location>
        <begin position="205"/>
        <end position="209"/>
    </location>
</feature>
<feature type="strand" evidence="8">
    <location>
        <begin position="213"/>
        <end position="219"/>
    </location>
</feature>
<feature type="strand" evidence="8">
    <location>
        <begin position="222"/>
        <end position="227"/>
    </location>
</feature>
<feature type="helix" evidence="8">
    <location>
        <begin position="229"/>
        <end position="233"/>
    </location>
</feature>
<feature type="helix" evidence="8">
    <location>
        <begin position="238"/>
        <end position="245"/>
    </location>
</feature>
<feature type="strand" evidence="8">
    <location>
        <begin position="246"/>
        <end position="249"/>
    </location>
</feature>
<feature type="helix" evidence="8">
    <location>
        <begin position="261"/>
        <end position="265"/>
    </location>
</feature>
<sequence length="269" mass="29097">MEQSVANLVDMRDVSFTRGNRCIFDNISLTVPRGKITAIMGPSGIGKTTLLRLIGGQIAPDHGEILFDGENIPAMSRSRLYTVRKRMSMLFQSGALFTDMNVFDNVAYPLREHTQLPAPLLHSTVMMKLEAVGLRGAAKLMPSELSGGMARRAALARAIALEPDLIMFDEPFVGQDPITMGVLVKLISELNSALGVTCVVVSHDVPEVLSIADHAWILADKKIVAHGSAQALQANPDPRVRQFLDGIADGPVPFRYPAGDYHADLLPGS</sequence>
<dbReference type="EC" id="7.6.2.-" evidence="7"/>
<dbReference type="EMBL" id="U18997">
    <property type="protein sequence ID" value="AAA57996.1"/>
    <property type="molecule type" value="Genomic_DNA"/>
</dbReference>
<dbReference type="EMBL" id="U00096">
    <property type="protein sequence ID" value="AAC76227.1"/>
    <property type="molecule type" value="Genomic_DNA"/>
</dbReference>
<dbReference type="EMBL" id="AP009048">
    <property type="protein sequence ID" value="BAE77239.1"/>
    <property type="molecule type" value="Genomic_DNA"/>
</dbReference>
<dbReference type="PIR" id="E65110">
    <property type="entry name" value="E65110"/>
</dbReference>
<dbReference type="RefSeq" id="NP_417662.1">
    <property type="nucleotide sequence ID" value="NC_000913.3"/>
</dbReference>
<dbReference type="RefSeq" id="WP_000438245.1">
    <property type="nucleotide sequence ID" value="NZ_STEB01000012.1"/>
</dbReference>
<dbReference type="PDB" id="6XGZ">
    <property type="method" value="X-ray"/>
    <property type="resolution" value="2.60 A"/>
    <property type="chains" value="A/C/E/G=1-269"/>
</dbReference>
<dbReference type="PDB" id="7CGE">
    <property type="method" value="EM"/>
    <property type="resolution" value="2.90 A"/>
    <property type="chains" value="B/E=1-269"/>
</dbReference>
<dbReference type="PDB" id="7CGN">
    <property type="method" value="EM"/>
    <property type="resolution" value="4.30 A"/>
    <property type="chains" value="B/E=1-269"/>
</dbReference>
<dbReference type="PDB" id="7CH0">
    <property type="method" value="EM"/>
    <property type="resolution" value="3.70 A"/>
    <property type="chains" value="B/E=1-269"/>
</dbReference>
<dbReference type="PDB" id="7CH6">
    <property type="method" value="EM"/>
    <property type="resolution" value="3.40 A"/>
    <property type="chains" value="C/D=1-269"/>
</dbReference>
<dbReference type="PDB" id="7CH7">
    <property type="method" value="EM"/>
    <property type="resolution" value="3.90 A"/>
    <property type="chains" value="C/D=1-269"/>
</dbReference>
<dbReference type="PDBsum" id="6XGZ"/>
<dbReference type="PDBsum" id="7CGE"/>
<dbReference type="PDBsum" id="7CGN"/>
<dbReference type="PDBsum" id="7CH0"/>
<dbReference type="PDBsum" id="7CH6"/>
<dbReference type="PDBsum" id="7CH7"/>
<dbReference type="EMDB" id="EMD-29041"/>
<dbReference type="EMDB" id="EMD-40162"/>
<dbReference type="SMR" id="P63386"/>
<dbReference type="BioGRID" id="4263401">
    <property type="interactions" value="124"/>
</dbReference>
<dbReference type="BioGRID" id="852042">
    <property type="interactions" value="1"/>
</dbReference>
<dbReference type="ComplexPortal" id="CPX-3464">
    <property type="entry name" value="MlaFEDB lipid transport complex"/>
</dbReference>
<dbReference type="DIP" id="DIP-35865N"/>
<dbReference type="FunCoup" id="P63386">
    <property type="interactions" value="496"/>
</dbReference>
<dbReference type="IntAct" id="P63386">
    <property type="interactions" value="9"/>
</dbReference>
<dbReference type="STRING" id="511145.b3195"/>
<dbReference type="TCDB" id="3.A.1.27.3">
    <property type="family name" value="the atp-binding cassette (abc) superfamily"/>
</dbReference>
<dbReference type="jPOST" id="P63386"/>
<dbReference type="PaxDb" id="511145-b3195"/>
<dbReference type="EnsemblBacteria" id="AAC76227">
    <property type="protein sequence ID" value="AAC76227"/>
    <property type="gene ID" value="b3195"/>
</dbReference>
<dbReference type="GeneID" id="93778786"/>
<dbReference type="GeneID" id="947729"/>
<dbReference type="KEGG" id="ecj:JW3162"/>
<dbReference type="KEGG" id="eco:b3195"/>
<dbReference type="KEGG" id="ecoc:C3026_17390"/>
<dbReference type="PATRIC" id="fig|1411691.4.peg.3536"/>
<dbReference type="EchoBASE" id="EB2653"/>
<dbReference type="eggNOG" id="COG1127">
    <property type="taxonomic scope" value="Bacteria"/>
</dbReference>
<dbReference type="HOGENOM" id="CLU_000604_1_22_6"/>
<dbReference type="InParanoid" id="P63386"/>
<dbReference type="OMA" id="MIMYDEP"/>
<dbReference type="OrthoDB" id="9802264at2"/>
<dbReference type="PhylomeDB" id="P63386"/>
<dbReference type="BioCyc" id="EcoCyc:YRBF-MONOMER"/>
<dbReference type="PRO" id="PR:P63386"/>
<dbReference type="Proteomes" id="UP000000625">
    <property type="component" value="Chromosome"/>
</dbReference>
<dbReference type="GO" id="GO:0016020">
    <property type="term" value="C:membrane"/>
    <property type="evidence" value="ECO:0000303"/>
    <property type="project" value="ComplexPortal"/>
</dbReference>
<dbReference type="GO" id="GO:1990531">
    <property type="term" value="C:phospholipid-translocating ATPase complex"/>
    <property type="evidence" value="ECO:0000353"/>
    <property type="project" value="ComplexPortal"/>
</dbReference>
<dbReference type="GO" id="GO:0005886">
    <property type="term" value="C:plasma membrane"/>
    <property type="evidence" value="ECO:0007669"/>
    <property type="project" value="UniProtKB-SubCell"/>
</dbReference>
<dbReference type="GO" id="GO:0005524">
    <property type="term" value="F:ATP binding"/>
    <property type="evidence" value="ECO:0000255"/>
    <property type="project" value="EcoCyc"/>
</dbReference>
<dbReference type="GO" id="GO:0016887">
    <property type="term" value="F:ATP hydrolysis activity"/>
    <property type="evidence" value="ECO:0000315"/>
    <property type="project" value="EcoCyc"/>
</dbReference>
<dbReference type="GO" id="GO:0120014">
    <property type="term" value="F:phospholipid transfer activity"/>
    <property type="evidence" value="ECO:0000314"/>
    <property type="project" value="EcoCyc"/>
</dbReference>
<dbReference type="GO" id="GO:0120010">
    <property type="term" value="P:intermembrane phospholipid transfer"/>
    <property type="evidence" value="ECO:0000314"/>
    <property type="project" value="EcoCyc"/>
</dbReference>
<dbReference type="GO" id="GO:0015914">
    <property type="term" value="P:phospholipid transport"/>
    <property type="evidence" value="ECO:0000303"/>
    <property type="project" value="ComplexPortal"/>
</dbReference>
<dbReference type="CDD" id="cd03261">
    <property type="entry name" value="ABC_Org_Solvent_Resistant"/>
    <property type="match status" value="1"/>
</dbReference>
<dbReference type="FunFam" id="3.40.50.300:FF:000192">
    <property type="entry name" value="Phospholipid ABC transporter ATP-binding protein MlaF"/>
    <property type="match status" value="1"/>
</dbReference>
<dbReference type="Gene3D" id="3.40.50.300">
    <property type="entry name" value="P-loop containing nucleotide triphosphate hydrolases"/>
    <property type="match status" value="1"/>
</dbReference>
<dbReference type="InterPro" id="IPR003593">
    <property type="entry name" value="AAA+_ATPase"/>
</dbReference>
<dbReference type="InterPro" id="IPR003439">
    <property type="entry name" value="ABC_transporter-like_ATP-bd"/>
</dbReference>
<dbReference type="InterPro" id="IPR017871">
    <property type="entry name" value="ABC_transporter-like_CS"/>
</dbReference>
<dbReference type="InterPro" id="IPR027417">
    <property type="entry name" value="P-loop_NTPase"/>
</dbReference>
<dbReference type="NCBIfam" id="NF008809">
    <property type="entry name" value="PRK11831.1"/>
    <property type="match status" value="1"/>
</dbReference>
<dbReference type="PANTHER" id="PTHR43023:SF6">
    <property type="entry name" value="INTERMEMBRANE PHOSPHOLIPID TRANSPORT SYSTEM ATP-BINDING PROTEIN MLAF"/>
    <property type="match status" value="1"/>
</dbReference>
<dbReference type="PANTHER" id="PTHR43023">
    <property type="entry name" value="PROTEIN TRIGALACTOSYLDIACYLGLYCEROL 3, CHLOROPLASTIC"/>
    <property type="match status" value="1"/>
</dbReference>
<dbReference type="Pfam" id="PF00005">
    <property type="entry name" value="ABC_tran"/>
    <property type="match status" value="1"/>
</dbReference>
<dbReference type="SMART" id="SM00382">
    <property type="entry name" value="AAA"/>
    <property type="match status" value="1"/>
</dbReference>
<dbReference type="SUPFAM" id="SSF52540">
    <property type="entry name" value="P-loop containing nucleoside triphosphate hydrolases"/>
    <property type="match status" value="1"/>
</dbReference>
<dbReference type="PROSITE" id="PS00211">
    <property type="entry name" value="ABC_TRANSPORTER_1"/>
    <property type="match status" value="1"/>
</dbReference>
<dbReference type="PROSITE" id="PS50893">
    <property type="entry name" value="ABC_TRANSPORTER_2"/>
    <property type="match status" value="1"/>
</dbReference>
<evidence type="ECO:0000255" key="1">
    <source>
        <dbReference type="PROSITE-ProRule" id="PRU00434"/>
    </source>
</evidence>
<evidence type="ECO:0000269" key="2">
    <source>
    </source>
</evidence>
<evidence type="ECO:0000269" key="3">
    <source>
    </source>
</evidence>
<evidence type="ECO:0000269" key="4">
    <source>
    </source>
</evidence>
<evidence type="ECO:0000303" key="5">
    <source>
    </source>
</evidence>
<evidence type="ECO:0000305" key="6"/>
<evidence type="ECO:0000305" key="7">
    <source>
    </source>
</evidence>
<evidence type="ECO:0007829" key="8">
    <source>
        <dbReference type="PDB" id="6XGZ"/>
    </source>
</evidence>
<evidence type="ECO:0007829" key="9">
    <source>
        <dbReference type="PDB" id="7CGE"/>
    </source>
</evidence>
<evidence type="ECO:0007829" key="10">
    <source>
        <dbReference type="PDB" id="7CH6"/>
    </source>
</evidence>
<reference key="1">
    <citation type="journal article" date="1997" name="Science">
        <title>The complete genome sequence of Escherichia coli K-12.</title>
        <authorList>
            <person name="Blattner F.R."/>
            <person name="Plunkett G. III"/>
            <person name="Bloch C.A."/>
            <person name="Perna N.T."/>
            <person name="Burland V."/>
            <person name="Riley M."/>
            <person name="Collado-Vides J."/>
            <person name="Glasner J.D."/>
            <person name="Rode C.K."/>
            <person name="Mayhew G.F."/>
            <person name="Gregor J."/>
            <person name="Davis N.W."/>
            <person name="Kirkpatrick H.A."/>
            <person name="Goeden M.A."/>
            <person name="Rose D.J."/>
            <person name="Mau B."/>
            <person name="Shao Y."/>
        </authorList>
    </citation>
    <scope>NUCLEOTIDE SEQUENCE [LARGE SCALE GENOMIC DNA]</scope>
    <source>
        <strain>K12 / MG1655 / ATCC 47076</strain>
    </source>
</reference>
<reference key="2">
    <citation type="journal article" date="2006" name="Mol. Syst. Biol.">
        <title>Highly accurate genome sequences of Escherichia coli K-12 strains MG1655 and W3110.</title>
        <authorList>
            <person name="Hayashi K."/>
            <person name="Morooka N."/>
            <person name="Yamamoto Y."/>
            <person name="Fujita K."/>
            <person name="Isono K."/>
            <person name="Choi S."/>
            <person name="Ohtsubo E."/>
            <person name="Baba T."/>
            <person name="Wanner B.L."/>
            <person name="Mori H."/>
            <person name="Horiuchi T."/>
        </authorList>
    </citation>
    <scope>NUCLEOTIDE SEQUENCE [LARGE SCALE GENOMIC DNA]</scope>
    <source>
        <strain>K12 / W3110 / ATCC 27325 / DSM 5911</strain>
    </source>
</reference>
<reference key="3">
    <citation type="journal article" date="2009" name="Proc. Natl. Acad. Sci. U.S.A.">
        <title>An ABC transport system that maintains lipid asymmetry in the gram-negative outer membrane.</title>
        <authorList>
            <person name="Malinverni J.C."/>
            <person name="Silhavy T.J."/>
        </authorList>
    </citation>
    <scope>FUNCTION IN PHOSPHOLIPID TRANSPORT</scope>
    <scope>SUBUNIT</scope>
    <scope>SUBCELLULAR LOCATION</scope>
    <scope>DISRUPTION PHENOTYPE</scope>
    <source>
        <strain>K12 / MC4100 / JA176</strain>
    </source>
</reference>
<reference key="4">
    <citation type="journal article" date="2016" name="Elife">
        <title>Defining key roles for auxiliary proteins in an ABC transporter that maintains bacterial outer membrane lipid asymmetry.</title>
        <authorList>
            <person name="Thong S."/>
            <person name="Ercan B."/>
            <person name="Torta F."/>
            <person name="Fong Z.Y."/>
            <person name="Wong H.Y."/>
            <person name="Wenk M.R."/>
            <person name="Chng S.S."/>
        </authorList>
    </citation>
    <scope>FUNCTION</scope>
    <scope>SUBUNIT</scope>
    <source>
        <strain>K12</strain>
    </source>
</reference>
<reference key="5">
    <citation type="journal article" date="2017" name="Cell">
        <title>Architectures of lipid transport systems for the bacterial outer membrane.</title>
        <authorList>
            <person name="Ekiert D.C."/>
            <person name="Bhabha G."/>
            <person name="Isom G.L."/>
            <person name="Greenan G."/>
            <person name="Ovchinnikov S."/>
            <person name="Henderson I.R."/>
            <person name="Cox J.S."/>
            <person name="Vale R.D."/>
        </authorList>
    </citation>
    <scope>IDENTIFICATION BY MASS SPECTROMETRY</scope>
    <scope>SUBUNIT</scope>
    <source>
        <strain>K12</strain>
    </source>
</reference>
<proteinExistence type="evidence at protein level"/>
<protein>
    <recommendedName>
        <fullName evidence="6">Intermembrane phospholipid transport system ATP-binding protein MlaF</fullName>
        <ecNumber evidence="7">7.6.2.-</ecNumber>
    </recommendedName>
</protein>
<organism>
    <name type="scientific">Escherichia coli (strain K12)</name>
    <dbReference type="NCBI Taxonomy" id="83333"/>
    <lineage>
        <taxon>Bacteria</taxon>
        <taxon>Pseudomonadati</taxon>
        <taxon>Pseudomonadota</taxon>
        <taxon>Gammaproteobacteria</taxon>
        <taxon>Enterobacterales</taxon>
        <taxon>Enterobacteriaceae</taxon>
        <taxon>Escherichia</taxon>
    </lineage>
</organism>
<gene>
    <name evidence="5" type="primary">mlaF</name>
    <name type="synonym">yrbF</name>
    <name type="ordered locus">b3195</name>
    <name type="ordered locus">JW3162</name>
</gene>
<name>MLAF_ECOLI</name>
<keyword id="KW-0002">3D-structure</keyword>
<keyword id="KW-0067">ATP-binding</keyword>
<keyword id="KW-0997">Cell inner membrane</keyword>
<keyword id="KW-1003">Cell membrane</keyword>
<keyword id="KW-0472">Membrane</keyword>
<keyword id="KW-0547">Nucleotide-binding</keyword>
<keyword id="KW-1185">Reference proteome</keyword>
<keyword id="KW-1278">Translocase</keyword>
<keyword id="KW-0813">Transport</keyword>
<accession>P63386</accession>
<accession>P45393</accession>
<accession>Q2M917</accession>